<accession>B2JJU4</accession>
<sequence>MSHTLRVIFAGTPEFAAAALAAIHEAGFPVPLVLTQPDRPAGRGMKLQASPVKRYAQEHGIEVAQPPSLRRNGKYPAQATAAIEQLRATPHDVMVVAAYGLLLPQEVLDIAPHGCINIHASLLPRWRGAAPIHRAIEAGDAETGITLMQMDAGLDTGAMISEVRTAIAGTDTTATLHDRLAEAGAKLIVDALVELERSGKLASIPQPAAGATYAEKIAKHEAALDWRRPAAELARQVRAFDPFPGGAATLDGAVLKLWSAAAVDASCKAEPGTIVEVSPEGVVVACGDGALRITQLQKPGGKRLPVRDFLAGSTLAAGQRFELAQPQ</sequence>
<evidence type="ECO:0000255" key="1">
    <source>
        <dbReference type="HAMAP-Rule" id="MF_00182"/>
    </source>
</evidence>
<proteinExistence type="inferred from homology"/>
<keyword id="KW-0648">Protein biosynthesis</keyword>
<keyword id="KW-1185">Reference proteome</keyword>
<keyword id="KW-0808">Transferase</keyword>
<feature type="chain" id="PRO_1000098387" description="Methionyl-tRNA formyltransferase">
    <location>
        <begin position="1"/>
        <end position="327"/>
    </location>
</feature>
<feature type="binding site" evidence="1">
    <location>
        <begin position="121"/>
        <end position="124"/>
    </location>
    <ligand>
        <name>(6S)-5,6,7,8-tetrahydrofolate</name>
        <dbReference type="ChEBI" id="CHEBI:57453"/>
    </ligand>
</feature>
<organism>
    <name type="scientific">Paraburkholderia phymatum (strain DSM 17167 / CIP 108236 / LMG 21445 / STM815)</name>
    <name type="common">Burkholderia phymatum</name>
    <dbReference type="NCBI Taxonomy" id="391038"/>
    <lineage>
        <taxon>Bacteria</taxon>
        <taxon>Pseudomonadati</taxon>
        <taxon>Pseudomonadota</taxon>
        <taxon>Betaproteobacteria</taxon>
        <taxon>Burkholderiales</taxon>
        <taxon>Burkholderiaceae</taxon>
        <taxon>Paraburkholderia</taxon>
    </lineage>
</organism>
<gene>
    <name evidence="1" type="primary">fmt</name>
    <name type="ordered locus">Bphy_0036</name>
</gene>
<reference key="1">
    <citation type="journal article" date="2014" name="Stand. Genomic Sci.">
        <title>Complete genome sequence of Burkholderia phymatum STM815(T), a broad host range and efficient nitrogen-fixing symbiont of Mimosa species.</title>
        <authorList>
            <person name="Moulin L."/>
            <person name="Klonowska A."/>
            <person name="Caroline B."/>
            <person name="Booth K."/>
            <person name="Vriezen J.A."/>
            <person name="Melkonian R."/>
            <person name="James E.K."/>
            <person name="Young J.P."/>
            <person name="Bena G."/>
            <person name="Hauser L."/>
            <person name="Land M."/>
            <person name="Kyrpides N."/>
            <person name="Bruce D."/>
            <person name="Chain P."/>
            <person name="Copeland A."/>
            <person name="Pitluck S."/>
            <person name="Woyke T."/>
            <person name="Lizotte-Waniewski M."/>
            <person name="Bristow J."/>
            <person name="Riley M."/>
        </authorList>
    </citation>
    <scope>NUCLEOTIDE SEQUENCE [LARGE SCALE GENOMIC DNA]</scope>
    <source>
        <strain>DSM 17167 / CIP 108236 / LMG 21445 / STM815</strain>
    </source>
</reference>
<dbReference type="EC" id="2.1.2.9" evidence="1"/>
<dbReference type="EMBL" id="CP001043">
    <property type="protein sequence ID" value="ACC69231.1"/>
    <property type="molecule type" value="Genomic_DNA"/>
</dbReference>
<dbReference type="RefSeq" id="WP_012399462.1">
    <property type="nucleotide sequence ID" value="NC_010622.1"/>
</dbReference>
<dbReference type="SMR" id="B2JJU4"/>
<dbReference type="STRING" id="391038.Bphy_0036"/>
<dbReference type="KEGG" id="bph:Bphy_0036"/>
<dbReference type="eggNOG" id="COG0223">
    <property type="taxonomic scope" value="Bacteria"/>
</dbReference>
<dbReference type="HOGENOM" id="CLU_033347_1_2_4"/>
<dbReference type="OrthoDB" id="9802815at2"/>
<dbReference type="Proteomes" id="UP000001192">
    <property type="component" value="Chromosome 1"/>
</dbReference>
<dbReference type="GO" id="GO:0005829">
    <property type="term" value="C:cytosol"/>
    <property type="evidence" value="ECO:0007669"/>
    <property type="project" value="TreeGrafter"/>
</dbReference>
<dbReference type="GO" id="GO:0004479">
    <property type="term" value="F:methionyl-tRNA formyltransferase activity"/>
    <property type="evidence" value="ECO:0007669"/>
    <property type="project" value="UniProtKB-UniRule"/>
</dbReference>
<dbReference type="CDD" id="cd08646">
    <property type="entry name" value="FMT_core_Met-tRNA-FMT_N"/>
    <property type="match status" value="1"/>
</dbReference>
<dbReference type="CDD" id="cd08704">
    <property type="entry name" value="Met_tRNA_FMT_C"/>
    <property type="match status" value="1"/>
</dbReference>
<dbReference type="FunFam" id="3.40.50.12230:FF:000001">
    <property type="entry name" value="Methionyl-tRNA formyltransferase"/>
    <property type="match status" value="1"/>
</dbReference>
<dbReference type="Gene3D" id="3.10.25.10">
    <property type="entry name" value="Formyl transferase, C-terminal domain"/>
    <property type="match status" value="1"/>
</dbReference>
<dbReference type="Gene3D" id="3.40.50.170">
    <property type="entry name" value="Formyl transferase, N-terminal domain"/>
    <property type="match status" value="1"/>
</dbReference>
<dbReference type="HAMAP" id="MF_00182">
    <property type="entry name" value="Formyl_trans"/>
    <property type="match status" value="1"/>
</dbReference>
<dbReference type="InterPro" id="IPR005794">
    <property type="entry name" value="Fmt"/>
</dbReference>
<dbReference type="InterPro" id="IPR005793">
    <property type="entry name" value="Formyl_trans_C"/>
</dbReference>
<dbReference type="InterPro" id="IPR037022">
    <property type="entry name" value="Formyl_trans_C_sf"/>
</dbReference>
<dbReference type="InterPro" id="IPR002376">
    <property type="entry name" value="Formyl_transf_N"/>
</dbReference>
<dbReference type="InterPro" id="IPR036477">
    <property type="entry name" value="Formyl_transf_N_sf"/>
</dbReference>
<dbReference type="InterPro" id="IPR011034">
    <property type="entry name" value="Formyl_transferase-like_C_sf"/>
</dbReference>
<dbReference type="InterPro" id="IPR001555">
    <property type="entry name" value="GART_AS"/>
</dbReference>
<dbReference type="InterPro" id="IPR044135">
    <property type="entry name" value="Met-tRNA-FMT_C"/>
</dbReference>
<dbReference type="InterPro" id="IPR041711">
    <property type="entry name" value="Met-tRNA-FMT_N"/>
</dbReference>
<dbReference type="NCBIfam" id="TIGR00460">
    <property type="entry name" value="fmt"/>
    <property type="match status" value="1"/>
</dbReference>
<dbReference type="PANTHER" id="PTHR11138">
    <property type="entry name" value="METHIONYL-TRNA FORMYLTRANSFERASE"/>
    <property type="match status" value="1"/>
</dbReference>
<dbReference type="PANTHER" id="PTHR11138:SF5">
    <property type="entry name" value="METHIONYL-TRNA FORMYLTRANSFERASE, MITOCHONDRIAL"/>
    <property type="match status" value="1"/>
</dbReference>
<dbReference type="Pfam" id="PF02911">
    <property type="entry name" value="Formyl_trans_C"/>
    <property type="match status" value="1"/>
</dbReference>
<dbReference type="Pfam" id="PF00551">
    <property type="entry name" value="Formyl_trans_N"/>
    <property type="match status" value="1"/>
</dbReference>
<dbReference type="SUPFAM" id="SSF50486">
    <property type="entry name" value="FMT C-terminal domain-like"/>
    <property type="match status" value="1"/>
</dbReference>
<dbReference type="SUPFAM" id="SSF53328">
    <property type="entry name" value="Formyltransferase"/>
    <property type="match status" value="1"/>
</dbReference>
<dbReference type="PROSITE" id="PS00373">
    <property type="entry name" value="GART"/>
    <property type="match status" value="1"/>
</dbReference>
<comment type="function">
    <text evidence="1">Attaches a formyl group to the free amino group of methionyl-tRNA(fMet). The formyl group appears to play a dual role in the initiator identity of N-formylmethionyl-tRNA by promoting its recognition by IF2 and preventing the misappropriation of this tRNA by the elongation apparatus.</text>
</comment>
<comment type="catalytic activity">
    <reaction evidence="1">
        <text>L-methionyl-tRNA(fMet) + (6R)-10-formyltetrahydrofolate = N-formyl-L-methionyl-tRNA(fMet) + (6S)-5,6,7,8-tetrahydrofolate + H(+)</text>
        <dbReference type="Rhea" id="RHEA:24380"/>
        <dbReference type="Rhea" id="RHEA-COMP:9952"/>
        <dbReference type="Rhea" id="RHEA-COMP:9953"/>
        <dbReference type="ChEBI" id="CHEBI:15378"/>
        <dbReference type="ChEBI" id="CHEBI:57453"/>
        <dbReference type="ChEBI" id="CHEBI:78530"/>
        <dbReference type="ChEBI" id="CHEBI:78844"/>
        <dbReference type="ChEBI" id="CHEBI:195366"/>
        <dbReference type="EC" id="2.1.2.9"/>
    </reaction>
</comment>
<comment type="similarity">
    <text evidence="1">Belongs to the Fmt family.</text>
</comment>
<protein>
    <recommendedName>
        <fullName evidence="1">Methionyl-tRNA formyltransferase</fullName>
        <ecNumber evidence="1">2.1.2.9</ecNumber>
    </recommendedName>
</protein>
<name>FMT_PARP8</name>